<gene>
    <name type="primary">moaR1</name>
    <name type="ordered locus">BCG_3145</name>
</gene>
<accession>A1KNB8</accession>
<reference key="1">
    <citation type="journal article" date="2007" name="Proc. Natl. Acad. Sci. U.S.A.">
        <title>Genome plasticity of BCG and impact on vaccine efficacy.</title>
        <authorList>
            <person name="Brosch R."/>
            <person name="Gordon S.V."/>
            <person name="Garnier T."/>
            <person name="Eiglmeier K."/>
            <person name="Frigui W."/>
            <person name="Valenti P."/>
            <person name="Dos Santos S."/>
            <person name="Duthoy S."/>
            <person name="Lacroix C."/>
            <person name="Garcia-Pelayo C."/>
            <person name="Inwald J.K."/>
            <person name="Golby P."/>
            <person name="Garcia J.N."/>
            <person name="Hewinson R.G."/>
            <person name="Behr M.A."/>
            <person name="Quail M.A."/>
            <person name="Churcher C."/>
            <person name="Barrell B.G."/>
            <person name="Parkhill J."/>
            <person name="Cole S.T."/>
        </authorList>
    </citation>
    <scope>NUCLEOTIDE SEQUENCE [LARGE SCALE GENOMIC DNA]</scope>
    <source>
        <strain>BCG / Pasteur 1173P2</strain>
    </source>
</reference>
<reference key="2">
    <citation type="journal article" date="2010" name="Microbiology">
        <title>Characterization of the transcriptional regulator Rv3124 of Mycobacterium tuberculosis identifies it as a positive regulator of molybdopterin biosynthesis and defines the functional consequences of a non-synonymous SNP in the Mycobacterium bovis BCG orthologue.</title>
        <authorList>
            <person name="Mendoza Lopez P."/>
            <person name="Golby P."/>
            <person name="Wooff E."/>
            <person name="Nunez Garcia J."/>
            <person name="Garcia Pelayo M.C."/>
            <person name="Conlon K."/>
            <person name="Gema Camacho A."/>
            <person name="Hewinson R.G."/>
            <person name="Polaina J."/>
            <person name="Suarez Garcia A."/>
            <person name="Gordon S.V."/>
        </authorList>
    </citation>
    <scope>FUNCTION AS A TRANSCRIPTIONAL REGULATOR</scope>
    <source>
        <strain>BCG / Pasteur 1173P2</strain>
    </source>
</reference>
<evidence type="ECO:0000255" key="1">
    <source>
        <dbReference type="PROSITE-ProRule" id="PRU01091"/>
    </source>
</evidence>
<evidence type="ECO:0000269" key="2">
    <source>
    </source>
</evidence>
<evidence type="ECO:0000305" key="3"/>
<comment type="function">
    <text evidence="2">Acts as a positive transcriptional regulator of the molybdopterin biosynthesis moa1 locus, promoting the expression of the moaA1B1C1D1 genes.</text>
</comment>
<comment type="miscellaneous">
    <text>Identification of single-nucleotide polymorphisms (SNPs) between the attenuated M.bovis BCG Pasteur strain and the virulent M.bovis strain AF2122/97 revealed a E159G mutation in BCG_3145. The E159G SNP was found to be present in all BCG strains, but absent from virulent M.bovis and Mycobacterium tuberculosis strains. The SNP in BCG_3145 was found to have a subtle effect on the activity of MoaR1, suggesting that this mutation is not a key event in the virulence attenuation of BCG.</text>
</comment>
<comment type="similarity">
    <text evidence="3">Belongs to the AfsR/DnrI/RedD regulatory family.</text>
</comment>
<comment type="sequence caution" evidence="3">
    <conflict type="erroneous initiation">
        <sequence resource="EMBL-CDS" id="CAL73134"/>
    </conflict>
    <text>Truncated N-terminus.</text>
</comment>
<proteinExistence type="evidence at protein level"/>
<sequence>MGQRPFSPNHRSGVLNATTAGAVQFNVLGPLELNLRGTKLPLGTPKQRAVLAMLLLSRNQVVAADALVQAIWEKSPPARARRTVHTYICNLRRTLSDAGVDSRNILVSEPPGYRLLIGDRQQCDLDRFVAAKESGLRASAKGYFSEAIRYLDSALQNWRGPVLGDLRSFMFVQMFSRALTGDELLVHTKLAEAAIACGRADVVIPKLERLVAMHPYRESLWKQLMLGYYVNEYQSAAIDAYHRLKSTLAEELGVEPAPTIRALYHKILRQLPMDDLVGRVTRGRVDLRGGNGAKVEELTESDKDLLPIGLA</sequence>
<protein>
    <recommendedName>
        <fullName>Transcriptional regulatory protein MoaR1</fullName>
    </recommendedName>
    <alternativeName>
        <fullName>Molybdopterin biosynthesis positive regulator</fullName>
    </alternativeName>
</protein>
<dbReference type="EMBL" id="AM408590">
    <property type="protein sequence ID" value="CAL73134.1"/>
    <property type="status" value="ALT_INIT"/>
    <property type="molecule type" value="Genomic_DNA"/>
</dbReference>
<dbReference type="RefSeq" id="WP_011799319.1">
    <property type="nucleotide sequence ID" value="NC_008769.1"/>
</dbReference>
<dbReference type="SMR" id="A1KNB8"/>
<dbReference type="KEGG" id="mbb:BCG_3145"/>
<dbReference type="HOGENOM" id="CLU_004665_0_0_11"/>
<dbReference type="Proteomes" id="UP000001472">
    <property type="component" value="Chromosome"/>
</dbReference>
<dbReference type="GO" id="GO:0003677">
    <property type="term" value="F:DNA binding"/>
    <property type="evidence" value="ECO:0007669"/>
    <property type="project" value="UniProtKB-KW"/>
</dbReference>
<dbReference type="GO" id="GO:0000160">
    <property type="term" value="P:phosphorelay signal transduction system"/>
    <property type="evidence" value="ECO:0007669"/>
    <property type="project" value="InterPro"/>
</dbReference>
<dbReference type="GO" id="GO:0006355">
    <property type="term" value="P:regulation of DNA-templated transcription"/>
    <property type="evidence" value="ECO:0007669"/>
    <property type="project" value="InterPro"/>
</dbReference>
<dbReference type="CDD" id="cd15831">
    <property type="entry name" value="BTAD"/>
    <property type="match status" value="1"/>
</dbReference>
<dbReference type="FunFam" id="1.25.40.10:FF:000222">
    <property type="entry name" value="SARP family transcriptional regulator"/>
    <property type="match status" value="1"/>
</dbReference>
<dbReference type="FunFam" id="1.10.10.10:FF:000528">
    <property type="entry name" value="Transcriptional regulatory protein EmbR"/>
    <property type="match status" value="1"/>
</dbReference>
<dbReference type="Gene3D" id="1.25.40.10">
    <property type="entry name" value="Tetratricopeptide repeat domain"/>
    <property type="match status" value="1"/>
</dbReference>
<dbReference type="Gene3D" id="1.10.10.10">
    <property type="entry name" value="Winged helix-like DNA-binding domain superfamily/Winged helix DNA-binding domain"/>
    <property type="match status" value="1"/>
</dbReference>
<dbReference type="InterPro" id="IPR051677">
    <property type="entry name" value="AfsR-DnrI-RedD_regulator"/>
</dbReference>
<dbReference type="InterPro" id="IPR005158">
    <property type="entry name" value="BTAD"/>
</dbReference>
<dbReference type="InterPro" id="IPR001867">
    <property type="entry name" value="OmpR/PhoB-type_DNA-bd"/>
</dbReference>
<dbReference type="InterPro" id="IPR016032">
    <property type="entry name" value="Sig_transdc_resp-reg_C-effctor"/>
</dbReference>
<dbReference type="InterPro" id="IPR011990">
    <property type="entry name" value="TPR-like_helical_dom_sf"/>
</dbReference>
<dbReference type="InterPro" id="IPR036388">
    <property type="entry name" value="WH-like_DNA-bd_sf"/>
</dbReference>
<dbReference type="PANTHER" id="PTHR35807:SF1">
    <property type="entry name" value="TRANSCRIPTIONAL REGULATOR REDD"/>
    <property type="match status" value="1"/>
</dbReference>
<dbReference type="PANTHER" id="PTHR35807">
    <property type="entry name" value="TRANSCRIPTIONAL REGULATOR REDD-RELATED"/>
    <property type="match status" value="1"/>
</dbReference>
<dbReference type="Pfam" id="PF03704">
    <property type="entry name" value="BTAD"/>
    <property type="match status" value="1"/>
</dbReference>
<dbReference type="Pfam" id="PF00486">
    <property type="entry name" value="Trans_reg_C"/>
    <property type="match status" value="1"/>
</dbReference>
<dbReference type="SMART" id="SM01043">
    <property type="entry name" value="BTAD"/>
    <property type="match status" value="1"/>
</dbReference>
<dbReference type="SMART" id="SM00862">
    <property type="entry name" value="Trans_reg_C"/>
    <property type="match status" value="1"/>
</dbReference>
<dbReference type="SUPFAM" id="SSF46894">
    <property type="entry name" value="C-terminal effector domain of the bipartite response regulators"/>
    <property type="match status" value="1"/>
</dbReference>
<dbReference type="SUPFAM" id="SSF48452">
    <property type="entry name" value="TPR-like"/>
    <property type="match status" value="1"/>
</dbReference>
<dbReference type="PROSITE" id="PS51755">
    <property type="entry name" value="OMPR_PHOB"/>
    <property type="match status" value="1"/>
</dbReference>
<name>MOAR1_MYCBP</name>
<feature type="chain" id="PRO_0000415514" description="Transcriptional regulatory protein MoaR1">
    <location>
        <begin position="1"/>
        <end position="311"/>
    </location>
</feature>
<feature type="DNA-binding region" description="OmpR/PhoB-type" evidence="1">
    <location>
        <begin position="15"/>
        <end position="117"/>
    </location>
</feature>
<organism>
    <name type="scientific">Mycobacterium bovis (strain BCG / Pasteur 1173P2)</name>
    <dbReference type="NCBI Taxonomy" id="410289"/>
    <lineage>
        <taxon>Bacteria</taxon>
        <taxon>Bacillati</taxon>
        <taxon>Actinomycetota</taxon>
        <taxon>Actinomycetes</taxon>
        <taxon>Mycobacteriales</taxon>
        <taxon>Mycobacteriaceae</taxon>
        <taxon>Mycobacterium</taxon>
        <taxon>Mycobacterium tuberculosis complex</taxon>
    </lineage>
</organism>
<keyword id="KW-0010">Activator</keyword>
<keyword id="KW-0238">DNA-binding</keyword>
<keyword id="KW-0804">Transcription</keyword>
<keyword id="KW-0805">Transcription regulation</keyword>